<name>WHIA_MYCA9</name>
<proteinExistence type="inferred from homology"/>
<gene>
    <name evidence="2" type="primary">whiA</name>
    <name type="ordered locus">MAB_2781c</name>
</gene>
<sequence>MAMTAEVKDELSRLVVTQVSSRRAEVASLLRFAGGLHIVSGRVVVEAEVDQGSIARRLRKDIFDLYGYNAVVHVLSAGGIRKTTRYVVRVAKDGEALARQTGLLDLRGRPVRGLPAQVVGGSVADAEAAWRGAFLAHGSLTEPGRSSALEVSCPGPEAALALVGAARRLGVSAKAREVRGSDRVVVRDGEAIGALLTRMGAQDTRLTWEERRMRREVRATANRLANFDDANLRRSARAAVAAAARVERALEILGDTVPDHLAAAGKLRVEHRQASLEELGRLADPVMTKDAVAGRIRRLLSMADRKAKTEGIPDTESAVTPELLEEA</sequence>
<keyword id="KW-0131">Cell cycle</keyword>
<keyword id="KW-0132">Cell division</keyword>
<keyword id="KW-0238">DNA-binding</keyword>
<keyword id="KW-1185">Reference proteome</keyword>
<feature type="chain" id="PRO_0000376521" description="Probable cell division protein WhiA">
    <location>
        <begin position="1"/>
        <end position="327"/>
    </location>
</feature>
<feature type="DNA-binding region" description="H-T-H motif" evidence="2">
    <location>
        <begin position="275"/>
        <end position="308"/>
    </location>
</feature>
<feature type="region of interest" description="Disordered" evidence="3">
    <location>
        <begin position="307"/>
        <end position="327"/>
    </location>
</feature>
<organism>
    <name type="scientific">Mycobacteroides abscessus (strain ATCC 19977 / DSM 44196 / CCUG 20993 / CIP 104536 / JCM 13569 / NCTC 13031 / TMC 1543 / L948)</name>
    <name type="common">Mycobacterium abscessus</name>
    <dbReference type="NCBI Taxonomy" id="561007"/>
    <lineage>
        <taxon>Bacteria</taxon>
        <taxon>Bacillati</taxon>
        <taxon>Actinomycetota</taxon>
        <taxon>Actinomycetes</taxon>
        <taxon>Mycobacteriales</taxon>
        <taxon>Mycobacteriaceae</taxon>
        <taxon>Mycobacteroides</taxon>
        <taxon>Mycobacteroides abscessus</taxon>
    </lineage>
</organism>
<evidence type="ECO:0000250" key="1">
    <source>
        <dbReference type="UniProtKB" id="P9WF45"/>
    </source>
</evidence>
<evidence type="ECO:0000255" key="2">
    <source>
        <dbReference type="HAMAP-Rule" id="MF_01420"/>
    </source>
</evidence>
<evidence type="ECO:0000256" key="3">
    <source>
        <dbReference type="SAM" id="MobiDB-lite"/>
    </source>
</evidence>
<dbReference type="EMBL" id="CU458896">
    <property type="protein sequence ID" value="CAM62860.1"/>
    <property type="status" value="ALT_INIT"/>
    <property type="molecule type" value="Genomic_DNA"/>
</dbReference>
<dbReference type="SMR" id="B1MC89"/>
<dbReference type="KEGG" id="mab:MAB_2781c"/>
<dbReference type="Proteomes" id="UP000007137">
    <property type="component" value="Chromosome"/>
</dbReference>
<dbReference type="GO" id="GO:0003677">
    <property type="term" value="F:DNA binding"/>
    <property type="evidence" value="ECO:0007669"/>
    <property type="project" value="UniProtKB-UniRule"/>
</dbReference>
<dbReference type="GO" id="GO:0051301">
    <property type="term" value="P:cell division"/>
    <property type="evidence" value="ECO:0007669"/>
    <property type="project" value="UniProtKB-UniRule"/>
</dbReference>
<dbReference type="GO" id="GO:0043937">
    <property type="term" value="P:regulation of sporulation"/>
    <property type="evidence" value="ECO:0007669"/>
    <property type="project" value="InterPro"/>
</dbReference>
<dbReference type="FunFam" id="3.10.28.10:FF:000001">
    <property type="entry name" value="Probable cell division protein WhiA"/>
    <property type="match status" value="1"/>
</dbReference>
<dbReference type="Gene3D" id="3.10.28.10">
    <property type="entry name" value="Homing endonucleases"/>
    <property type="match status" value="1"/>
</dbReference>
<dbReference type="HAMAP" id="MF_01420">
    <property type="entry name" value="HTH_type_WhiA"/>
    <property type="match status" value="1"/>
</dbReference>
<dbReference type="InterPro" id="IPR027434">
    <property type="entry name" value="Homing_endonucl"/>
</dbReference>
<dbReference type="InterPro" id="IPR018478">
    <property type="entry name" value="Sporu_reg_WhiA_N_dom"/>
</dbReference>
<dbReference type="InterPro" id="IPR003802">
    <property type="entry name" value="Sporulation_regulator_WhiA"/>
</dbReference>
<dbReference type="InterPro" id="IPR023054">
    <property type="entry name" value="Sporulation_regulator_WhiA_C"/>
</dbReference>
<dbReference type="InterPro" id="IPR039518">
    <property type="entry name" value="WhiA_LAGLIDADG_dom"/>
</dbReference>
<dbReference type="NCBIfam" id="TIGR00647">
    <property type="entry name" value="DNA_bind_WhiA"/>
    <property type="match status" value="1"/>
</dbReference>
<dbReference type="PANTHER" id="PTHR37307">
    <property type="entry name" value="CELL DIVISION PROTEIN WHIA-RELATED"/>
    <property type="match status" value="1"/>
</dbReference>
<dbReference type="PANTHER" id="PTHR37307:SF1">
    <property type="entry name" value="CELL DIVISION PROTEIN WHIA-RELATED"/>
    <property type="match status" value="1"/>
</dbReference>
<dbReference type="Pfam" id="PF02650">
    <property type="entry name" value="HTH_WhiA"/>
    <property type="match status" value="1"/>
</dbReference>
<dbReference type="Pfam" id="PF14527">
    <property type="entry name" value="LAGLIDADG_WhiA"/>
    <property type="match status" value="1"/>
</dbReference>
<dbReference type="Pfam" id="PF10298">
    <property type="entry name" value="WhiA_N"/>
    <property type="match status" value="1"/>
</dbReference>
<protein>
    <recommendedName>
        <fullName evidence="2">Probable cell division protein WhiA</fullName>
    </recommendedName>
</protein>
<comment type="function">
    <text evidence="2">Involved in cell division and chromosome segregation.</text>
</comment>
<comment type="similarity">
    <text evidence="2">Belongs to the WhiA family.</text>
</comment>
<comment type="sequence caution" evidence="1">
    <conflict type="erroneous initiation">
        <sequence resource="EMBL-CDS" id="CAM62860"/>
    </conflict>
    <text>Truncated N-terminus.</text>
</comment>
<reference key="1">
    <citation type="journal article" date="2009" name="PLoS ONE">
        <title>Non mycobacterial virulence genes in the genome of the emerging pathogen Mycobacterium abscessus.</title>
        <authorList>
            <person name="Ripoll F."/>
            <person name="Pasek S."/>
            <person name="Schenowitz C."/>
            <person name="Dossat C."/>
            <person name="Barbe V."/>
            <person name="Rottman M."/>
            <person name="Macheras E."/>
            <person name="Heym B."/>
            <person name="Herrmann J.L."/>
            <person name="Daffe M."/>
            <person name="Brosch R."/>
            <person name="Risler J.L."/>
            <person name="Gaillard J.L."/>
        </authorList>
    </citation>
    <scope>NUCLEOTIDE SEQUENCE [LARGE SCALE GENOMIC DNA]</scope>
    <source>
        <strain>ATCC 19977 / DSM 44196 / CCUG 20993 / CIP 104536 / JCM 13569 / NCTC 13031 / TMC 1543 / L948</strain>
    </source>
</reference>
<accession>B1MC89</accession>